<name>EVGS_ECO57</name>
<proteinExistence type="inferred from homology"/>
<dbReference type="EC" id="2.7.13.3"/>
<dbReference type="EMBL" id="AE005174">
    <property type="protein sequence ID" value="AAG57495.1"/>
    <property type="molecule type" value="Genomic_DNA"/>
</dbReference>
<dbReference type="EMBL" id="BA000007">
    <property type="protein sequence ID" value="BAB36672.1"/>
    <property type="molecule type" value="Genomic_DNA"/>
</dbReference>
<dbReference type="PIR" id="A91035">
    <property type="entry name" value="A91035"/>
</dbReference>
<dbReference type="PIR" id="C85879">
    <property type="entry name" value="C85879"/>
</dbReference>
<dbReference type="RefSeq" id="NP_311276.1">
    <property type="nucleotide sequence ID" value="NC_002695.1"/>
</dbReference>
<dbReference type="RefSeq" id="WP_001301578.1">
    <property type="nucleotide sequence ID" value="NZ_VOAI01000001.1"/>
</dbReference>
<dbReference type="SMR" id="P58402"/>
<dbReference type="STRING" id="155864.Z3632"/>
<dbReference type="GeneID" id="915650"/>
<dbReference type="KEGG" id="ece:Z3632"/>
<dbReference type="KEGG" id="ecs:ECs_3249"/>
<dbReference type="PATRIC" id="fig|386585.9.peg.3393"/>
<dbReference type="eggNOG" id="COG0784">
    <property type="taxonomic scope" value="Bacteria"/>
</dbReference>
<dbReference type="eggNOG" id="COG0834">
    <property type="taxonomic scope" value="Bacteria"/>
</dbReference>
<dbReference type="eggNOG" id="COG2198">
    <property type="taxonomic scope" value="Bacteria"/>
</dbReference>
<dbReference type="eggNOG" id="COG2205">
    <property type="taxonomic scope" value="Bacteria"/>
</dbReference>
<dbReference type="HOGENOM" id="CLU_000445_37_3_6"/>
<dbReference type="OMA" id="RPDYPPF"/>
<dbReference type="BRENDA" id="2.7.13.3">
    <property type="organism ID" value="2026"/>
</dbReference>
<dbReference type="Proteomes" id="UP000000558">
    <property type="component" value="Chromosome"/>
</dbReference>
<dbReference type="Proteomes" id="UP000002519">
    <property type="component" value="Chromosome"/>
</dbReference>
<dbReference type="GO" id="GO:0005886">
    <property type="term" value="C:plasma membrane"/>
    <property type="evidence" value="ECO:0007669"/>
    <property type="project" value="UniProtKB-SubCell"/>
</dbReference>
<dbReference type="GO" id="GO:0005524">
    <property type="term" value="F:ATP binding"/>
    <property type="evidence" value="ECO:0007669"/>
    <property type="project" value="UniProtKB-KW"/>
</dbReference>
<dbReference type="GO" id="GO:0009927">
    <property type="term" value="F:histidine phosphotransfer kinase activity"/>
    <property type="evidence" value="ECO:0007669"/>
    <property type="project" value="TreeGrafter"/>
</dbReference>
<dbReference type="GO" id="GO:0000155">
    <property type="term" value="F:phosphorelay sensor kinase activity"/>
    <property type="evidence" value="ECO:0007669"/>
    <property type="project" value="InterPro"/>
</dbReference>
<dbReference type="CDD" id="cd16922">
    <property type="entry name" value="HATPase_EvgS-ArcB-TorS-like"/>
    <property type="match status" value="1"/>
</dbReference>
<dbReference type="CDD" id="cd00082">
    <property type="entry name" value="HisKA"/>
    <property type="match status" value="1"/>
</dbReference>
<dbReference type="CDD" id="cd00088">
    <property type="entry name" value="HPT"/>
    <property type="match status" value="1"/>
</dbReference>
<dbReference type="CDD" id="cd13705">
    <property type="entry name" value="PBP2_BvgS_D1"/>
    <property type="match status" value="1"/>
</dbReference>
<dbReference type="CDD" id="cd13707">
    <property type="entry name" value="PBP2_BvgS_D2"/>
    <property type="match status" value="1"/>
</dbReference>
<dbReference type="CDD" id="cd17546">
    <property type="entry name" value="REC_hyHK_CKI1_RcsC-like"/>
    <property type="match status" value="1"/>
</dbReference>
<dbReference type="FunFam" id="3.40.50.2300:FF:000121">
    <property type="entry name" value="Sensor histidine kinase RcsC"/>
    <property type="match status" value="1"/>
</dbReference>
<dbReference type="FunFam" id="3.30.565.10:FF:000006">
    <property type="entry name" value="Sensor histidine kinase WalK"/>
    <property type="match status" value="1"/>
</dbReference>
<dbReference type="FunFam" id="1.10.287.130:FF:000080">
    <property type="entry name" value="Sensor histidine kinase/response regulator EvgS"/>
    <property type="match status" value="1"/>
</dbReference>
<dbReference type="Gene3D" id="1.10.287.130">
    <property type="match status" value="1"/>
</dbReference>
<dbReference type="Gene3D" id="3.40.50.2300">
    <property type="match status" value="1"/>
</dbReference>
<dbReference type="Gene3D" id="3.30.565.10">
    <property type="entry name" value="Histidine kinase-like ATPase, C-terminal domain"/>
    <property type="match status" value="1"/>
</dbReference>
<dbReference type="Gene3D" id="1.20.120.160">
    <property type="entry name" value="HPT domain"/>
    <property type="match status" value="1"/>
</dbReference>
<dbReference type="Gene3D" id="3.40.190.10">
    <property type="entry name" value="Periplasmic binding protein-like II"/>
    <property type="match status" value="4"/>
</dbReference>
<dbReference type="InterPro" id="IPR049870">
    <property type="entry name" value="BvgS-like_periplasmic1"/>
</dbReference>
<dbReference type="InterPro" id="IPR049871">
    <property type="entry name" value="BvgS-like_periplasmic2"/>
</dbReference>
<dbReference type="InterPro" id="IPR011006">
    <property type="entry name" value="CheY-like_superfamily"/>
</dbReference>
<dbReference type="InterPro" id="IPR036890">
    <property type="entry name" value="HATPase_C_sf"/>
</dbReference>
<dbReference type="InterPro" id="IPR005467">
    <property type="entry name" value="His_kinase_dom"/>
</dbReference>
<dbReference type="InterPro" id="IPR003661">
    <property type="entry name" value="HisK_dim/P_dom"/>
</dbReference>
<dbReference type="InterPro" id="IPR036097">
    <property type="entry name" value="HisK_dim/P_sf"/>
</dbReference>
<dbReference type="InterPro" id="IPR036641">
    <property type="entry name" value="HPT_dom_sf"/>
</dbReference>
<dbReference type="InterPro" id="IPR004358">
    <property type="entry name" value="Sig_transdc_His_kin-like_C"/>
</dbReference>
<dbReference type="InterPro" id="IPR008207">
    <property type="entry name" value="Sig_transdc_His_kin_Hpt_dom"/>
</dbReference>
<dbReference type="InterPro" id="IPR001789">
    <property type="entry name" value="Sig_transdc_resp-reg_receiver"/>
</dbReference>
<dbReference type="InterPro" id="IPR001638">
    <property type="entry name" value="Solute-binding_3/MltF_N"/>
</dbReference>
<dbReference type="NCBIfam" id="NF007420">
    <property type="entry name" value="PRK09959.1"/>
    <property type="match status" value="1"/>
</dbReference>
<dbReference type="PANTHER" id="PTHR43047:SF72">
    <property type="entry name" value="OSMOSENSING HISTIDINE PROTEIN KINASE SLN1"/>
    <property type="match status" value="1"/>
</dbReference>
<dbReference type="PANTHER" id="PTHR43047">
    <property type="entry name" value="TWO-COMPONENT HISTIDINE PROTEIN KINASE"/>
    <property type="match status" value="1"/>
</dbReference>
<dbReference type="Pfam" id="PF02518">
    <property type="entry name" value="HATPase_c"/>
    <property type="match status" value="1"/>
</dbReference>
<dbReference type="Pfam" id="PF00512">
    <property type="entry name" value="HisKA"/>
    <property type="match status" value="1"/>
</dbReference>
<dbReference type="Pfam" id="PF00072">
    <property type="entry name" value="Response_reg"/>
    <property type="match status" value="1"/>
</dbReference>
<dbReference type="Pfam" id="PF00497">
    <property type="entry name" value="SBP_bac_3"/>
    <property type="match status" value="2"/>
</dbReference>
<dbReference type="PRINTS" id="PR00344">
    <property type="entry name" value="BCTRLSENSOR"/>
</dbReference>
<dbReference type="SMART" id="SM00387">
    <property type="entry name" value="HATPase_c"/>
    <property type="match status" value="1"/>
</dbReference>
<dbReference type="SMART" id="SM00388">
    <property type="entry name" value="HisKA"/>
    <property type="match status" value="1"/>
</dbReference>
<dbReference type="SMART" id="SM00073">
    <property type="entry name" value="HPT"/>
    <property type="match status" value="1"/>
</dbReference>
<dbReference type="SMART" id="SM00062">
    <property type="entry name" value="PBPb"/>
    <property type="match status" value="2"/>
</dbReference>
<dbReference type="SMART" id="SM00448">
    <property type="entry name" value="REC"/>
    <property type="match status" value="1"/>
</dbReference>
<dbReference type="SUPFAM" id="SSF55874">
    <property type="entry name" value="ATPase domain of HSP90 chaperone/DNA topoisomerase II/histidine kinase"/>
    <property type="match status" value="1"/>
</dbReference>
<dbReference type="SUPFAM" id="SSF52172">
    <property type="entry name" value="CheY-like"/>
    <property type="match status" value="1"/>
</dbReference>
<dbReference type="SUPFAM" id="SSF47226">
    <property type="entry name" value="Histidine-containing phosphotransfer domain, HPT domain"/>
    <property type="match status" value="1"/>
</dbReference>
<dbReference type="SUPFAM" id="SSF47384">
    <property type="entry name" value="Homodimeric domain of signal transducing histidine kinase"/>
    <property type="match status" value="1"/>
</dbReference>
<dbReference type="SUPFAM" id="SSF53850">
    <property type="entry name" value="Periplasmic binding protein-like II"/>
    <property type="match status" value="2"/>
</dbReference>
<dbReference type="PROSITE" id="PS50109">
    <property type="entry name" value="HIS_KIN"/>
    <property type="match status" value="1"/>
</dbReference>
<dbReference type="PROSITE" id="PS50894">
    <property type="entry name" value="HPT"/>
    <property type="match status" value="1"/>
</dbReference>
<dbReference type="PROSITE" id="PS50110">
    <property type="entry name" value="RESPONSE_REGULATORY"/>
    <property type="match status" value="1"/>
</dbReference>
<feature type="signal peptide" evidence="2">
    <location>
        <begin position="1"/>
        <end position="21"/>
    </location>
</feature>
<feature type="chain" id="PRO_0000032372" description="Sensor protein EvgS">
    <location>
        <begin position="22"/>
        <end position="1197"/>
    </location>
</feature>
<feature type="topological domain" description="Cytoplasmic" evidence="2">
    <location>
        <begin position="22"/>
        <end position="325"/>
    </location>
</feature>
<feature type="transmembrane region" description="Helical" evidence="2">
    <location>
        <begin position="326"/>
        <end position="346"/>
    </location>
</feature>
<feature type="topological domain" description="Periplasmic" evidence="2">
    <location>
        <begin position="347"/>
        <end position="537"/>
    </location>
</feature>
<feature type="transmembrane region" description="Helical" evidence="2">
    <location>
        <begin position="538"/>
        <end position="558"/>
    </location>
</feature>
<feature type="topological domain" description="Cytoplasmic" evidence="2">
    <location>
        <begin position="559"/>
        <end position="1197"/>
    </location>
</feature>
<feature type="domain" description="Histidine kinase" evidence="3">
    <location>
        <begin position="718"/>
        <end position="938"/>
    </location>
</feature>
<feature type="domain" description="Response regulatory" evidence="5">
    <location>
        <begin position="960"/>
        <end position="1074"/>
    </location>
</feature>
<feature type="domain" description="HPt" evidence="4">
    <location>
        <begin position="1098"/>
        <end position="1197"/>
    </location>
</feature>
<feature type="modified residue" description="Phosphohistidine; by autocatalysis" evidence="3">
    <location>
        <position position="721"/>
    </location>
</feature>
<feature type="modified residue" description="4-aspartylphosphate" evidence="5">
    <location>
        <position position="1009"/>
    </location>
</feature>
<feature type="modified residue" description="Phosphohistidine" evidence="4">
    <location>
        <position position="1137"/>
    </location>
</feature>
<gene>
    <name type="primary">evgS</name>
    <name type="ordered locus">Z3632</name>
    <name type="ordered locus">ECs3249</name>
</gene>
<accession>P58402</accession>
<organism>
    <name type="scientific">Escherichia coli O157:H7</name>
    <dbReference type="NCBI Taxonomy" id="83334"/>
    <lineage>
        <taxon>Bacteria</taxon>
        <taxon>Pseudomonadati</taxon>
        <taxon>Pseudomonadota</taxon>
        <taxon>Gammaproteobacteria</taxon>
        <taxon>Enterobacterales</taxon>
        <taxon>Enterobacteriaceae</taxon>
        <taxon>Escherichia</taxon>
    </lineage>
</organism>
<reference key="1">
    <citation type="journal article" date="2001" name="Nature">
        <title>Genome sequence of enterohaemorrhagic Escherichia coli O157:H7.</title>
        <authorList>
            <person name="Perna N.T."/>
            <person name="Plunkett G. III"/>
            <person name="Burland V."/>
            <person name="Mau B."/>
            <person name="Glasner J.D."/>
            <person name="Rose D.J."/>
            <person name="Mayhew G.F."/>
            <person name="Evans P.S."/>
            <person name="Gregor J."/>
            <person name="Kirkpatrick H.A."/>
            <person name="Posfai G."/>
            <person name="Hackett J."/>
            <person name="Klink S."/>
            <person name="Boutin A."/>
            <person name="Shao Y."/>
            <person name="Miller L."/>
            <person name="Grotbeck E.J."/>
            <person name="Davis N.W."/>
            <person name="Lim A."/>
            <person name="Dimalanta E.T."/>
            <person name="Potamousis K."/>
            <person name="Apodaca J."/>
            <person name="Anantharaman T.S."/>
            <person name="Lin J."/>
            <person name="Yen G."/>
            <person name="Schwartz D.C."/>
            <person name="Welch R.A."/>
            <person name="Blattner F.R."/>
        </authorList>
    </citation>
    <scope>NUCLEOTIDE SEQUENCE [LARGE SCALE GENOMIC DNA]</scope>
    <source>
        <strain>O157:H7 / EDL933 / ATCC 700927 / EHEC</strain>
    </source>
</reference>
<reference key="2">
    <citation type="journal article" date="2001" name="DNA Res.">
        <title>Complete genome sequence of enterohemorrhagic Escherichia coli O157:H7 and genomic comparison with a laboratory strain K-12.</title>
        <authorList>
            <person name="Hayashi T."/>
            <person name="Makino K."/>
            <person name="Ohnishi M."/>
            <person name="Kurokawa K."/>
            <person name="Ishii K."/>
            <person name="Yokoyama K."/>
            <person name="Han C.-G."/>
            <person name="Ohtsubo E."/>
            <person name="Nakayama K."/>
            <person name="Murata T."/>
            <person name="Tanaka M."/>
            <person name="Tobe T."/>
            <person name="Iida T."/>
            <person name="Takami H."/>
            <person name="Honda T."/>
            <person name="Sasakawa C."/>
            <person name="Ogasawara N."/>
            <person name="Yasunaga T."/>
            <person name="Kuhara S."/>
            <person name="Shiba T."/>
            <person name="Hattori M."/>
            <person name="Shinagawa H."/>
        </authorList>
    </citation>
    <scope>NUCLEOTIDE SEQUENCE [LARGE SCALE GENOMIC DNA]</scope>
    <source>
        <strain>O157:H7 / Sakai / RIMD 0509952 / EHEC</strain>
    </source>
</reference>
<evidence type="ECO:0000250" key="1"/>
<evidence type="ECO:0000255" key="2"/>
<evidence type="ECO:0000255" key="3">
    <source>
        <dbReference type="PROSITE-ProRule" id="PRU00107"/>
    </source>
</evidence>
<evidence type="ECO:0000255" key="4">
    <source>
        <dbReference type="PROSITE-ProRule" id="PRU00110"/>
    </source>
</evidence>
<evidence type="ECO:0000255" key="5">
    <source>
        <dbReference type="PROSITE-ProRule" id="PRU00169"/>
    </source>
</evidence>
<evidence type="ECO:0000305" key="6"/>
<protein>
    <recommendedName>
        <fullName>Sensor protein EvgS</fullName>
        <ecNumber>2.7.13.3</ecNumber>
    </recommendedName>
</protein>
<sequence length="1197" mass="134954">MKFLPYIFLLCCGLWSTISFADEDYIEYRGISSNNRVTLDPLRLSNKELRWLASKKNLVIAVHKSQTATLLHTDSQQRVRGINADYLNLLKRALNIKLTLREYADHQKAMDALEEGEVDIVLSHLVASPPLNDDIAATKPLIITFPALVTTLHDSMRPLTSSKPVNIARVANYPPDEVIHQSFPKATIISFTNLYQALASVSAGQNDYFIGSNIITSSMISRYFTHSLNVVKYYNSPRQYNFFLTRKESVILNEVLNRFVDALTNEVRYEVSQNWLDTGNLAFLNKPLELTEHEKQWIKQHPDLKVLENPYSPPYSMTDENGSVRGVMGDILNIITLQTGLNFSPITVSHNIHAGTQLNPGGWDILPGAIYSEDRENNVLFAEAFITTPYVFVMQKAPDSEQTLKKGMKVAIPYYYELHSQLKEMYPEVEWIKVDNASAAFHKVKEGELDALVATQLNSRYMIDHYYPNELYHFLIPGVPNASLSFAFPRGEPELKDIINKALNAIPPSEVLRLTEKWIKMPNVTIDTWDLYSEQFYIVTTLSVLLVGSSLLWGFYLLRSVRRRKVIQGDLENQISFRKALSDSLPNPTYVVNWQGNVISHNSAFEHYFTADYYKNAMLPLENSESPFKDVFSNTHEVTAETKENRTIYTQVFEIDNGIEKRCINHWHTLCNLPASEHAVYICGWQDITETRDLIHALEVERNKAINATVAKSQFLATMSHEIRTPISSIMGFLELLSGSGLSKEQRVEAISLAYATGQSLLGLIGEILDVDKIESGNYQLQPQWVDIPTLVQNTCHSFGAIAASKSIALSCSSTFPDHYLVKIDPQAFKQVLSNLLSNALKFTTEGAVKITTSLVHIDDNHAVIKMTIMDSGSGLSQEEQQQLFKRYSQTSAGRQQTGSGLGLMICKELIKNMQGDLSLESHPGIGTTFTITIPVEIIQQVAAVEAKAEQPITLPEKLSILIADDHPTNRLLLKRQLNLLGYDVDEATDGVQALHKVSMQHYDLLITDVNMPNVDGFELTRKLREQNSSLPIWGLTANAQANEREKGLNCGMNLCLFKPLTLDVLKTHLSQLHQVAHIVPQYRHLDIEALKNNTANDLQLMQEILMTFQHETHKDLPAAFHALEAGDNRTFHQCIHRIHGAANILNLQKLINISHQLEITPVSDDSKPEILQLLNSVKEHIAELDQEIAVFCQQNN</sequence>
<comment type="function">
    <text evidence="1">Member of the two-component regulatory system EvgS/EvgA. Phosphorylates EvgA via a four-step phosphorelay in response to environmental signals (By similarity).</text>
</comment>
<comment type="catalytic activity">
    <reaction>
        <text>ATP + protein L-histidine = ADP + protein N-phospho-L-histidine.</text>
        <dbReference type="EC" id="2.7.13.3"/>
    </reaction>
</comment>
<comment type="subcellular location">
    <subcellularLocation>
        <location evidence="6">Cell inner membrane</location>
        <topology evidence="6">Multi-pass membrane protein</topology>
    </subcellularLocation>
</comment>
<comment type="PTM">
    <text evidence="1">Activation requires a sequential transfer of a phosphate group from a His in the primary transmitter domain, to an Asp in the receiver domain and to a His in the secondary transmitter domain.</text>
</comment>
<keyword id="KW-0067">ATP-binding</keyword>
<keyword id="KW-0997">Cell inner membrane</keyword>
<keyword id="KW-1003">Cell membrane</keyword>
<keyword id="KW-0418">Kinase</keyword>
<keyword id="KW-0472">Membrane</keyword>
<keyword id="KW-0547">Nucleotide-binding</keyword>
<keyword id="KW-0597">Phosphoprotein</keyword>
<keyword id="KW-1185">Reference proteome</keyword>
<keyword id="KW-0732">Signal</keyword>
<keyword id="KW-0808">Transferase</keyword>
<keyword id="KW-0812">Transmembrane</keyword>
<keyword id="KW-1133">Transmembrane helix</keyword>
<keyword id="KW-0902">Two-component regulatory system</keyword>